<feature type="transit peptide" description="Mitochondrion" evidence="3">
    <location>
        <begin position="1"/>
        <end position="10"/>
    </location>
</feature>
<feature type="chain" id="PRO_0000347234" description="D-2-hydroxyglutarate dehydrogenase, mitochondrial">
    <location>
        <begin position="11"/>
        <end position="544"/>
    </location>
</feature>
<feature type="domain" description="FAD-binding PCMH-type" evidence="4">
    <location>
        <begin position="119"/>
        <end position="298"/>
    </location>
</feature>
<feature type="binding site" evidence="2">
    <location>
        <position position="409"/>
    </location>
    <ligand>
        <name>(R)-2-hydroxyglutarate</name>
        <dbReference type="ChEBI" id="CHEBI:15801"/>
    </ligand>
</feature>
<feature type="binding site" evidence="2">
    <location>
        <position position="409"/>
    </location>
    <ligand>
        <name>(R)-lactate</name>
        <dbReference type="ChEBI" id="CHEBI:16004"/>
    </ligand>
</feature>
<feature type="binding site" evidence="2">
    <location>
        <position position="409"/>
    </location>
    <ligand>
        <name>(R)-malate</name>
        <dbReference type="ChEBI" id="CHEBI:15588"/>
    </ligand>
</feature>
<feature type="binding site" evidence="2">
    <location>
        <position position="413"/>
    </location>
    <ligand>
        <name>(R)-2-hydroxyglutarate</name>
        <dbReference type="ChEBI" id="CHEBI:15801"/>
    </ligand>
</feature>
<feature type="binding site" evidence="2">
    <location>
        <position position="413"/>
    </location>
    <ligand>
        <name>(R)-malate</name>
        <dbReference type="ChEBI" id="CHEBI:15588"/>
    </ligand>
</feature>
<feature type="binding site" evidence="2">
    <location>
        <position position="424"/>
    </location>
    <ligand>
        <name>(R)-2-hydroxyglutarate</name>
        <dbReference type="ChEBI" id="CHEBI:15801"/>
    </ligand>
</feature>
<feature type="binding site" evidence="2">
    <location>
        <position position="424"/>
    </location>
    <ligand>
        <name>(R)-malate</name>
        <dbReference type="ChEBI" id="CHEBI:15588"/>
    </ligand>
</feature>
<feature type="binding site" evidence="2">
    <location>
        <position position="457"/>
    </location>
    <ligand>
        <name>Zn(2+)</name>
        <dbReference type="ChEBI" id="CHEBI:29105"/>
    </ligand>
</feature>
<feature type="binding site" evidence="2">
    <location>
        <position position="464"/>
    </location>
    <ligand>
        <name>Zn(2+)</name>
        <dbReference type="ChEBI" id="CHEBI:29105"/>
    </ligand>
</feature>
<feature type="binding site" evidence="2">
    <location>
        <position position="466"/>
    </location>
    <ligand>
        <name>(R)-2-hydroxyglutarate</name>
        <dbReference type="ChEBI" id="CHEBI:15801"/>
    </ligand>
</feature>
<feature type="binding site" evidence="2">
    <location>
        <position position="498"/>
    </location>
    <ligand>
        <name>Zn(2+)</name>
        <dbReference type="ChEBI" id="CHEBI:29105"/>
    </ligand>
</feature>
<feature type="binding site" evidence="2">
    <location>
        <position position="499"/>
    </location>
    <ligand>
        <name>(R)-2-hydroxyglutarate</name>
        <dbReference type="ChEBI" id="CHEBI:15801"/>
    </ligand>
</feature>
<feature type="binding site" evidence="2">
    <location>
        <position position="499"/>
    </location>
    <ligand>
        <name>(R)-lactate</name>
        <dbReference type="ChEBI" id="CHEBI:16004"/>
    </ligand>
</feature>
<feature type="binding site" evidence="2">
    <location>
        <position position="499"/>
    </location>
    <ligand>
        <name>(R)-malate</name>
        <dbReference type="ChEBI" id="CHEBI:15588"/>
    </ligand>
</feature>
<feature type="modified residue" description="N6-succinyllysine" evidence="1">
    <location>
        <position position="124"/>
    </location>
</feature>
<feature type="sequence conflict" description="In Ref. 1; ABF57376." evidence="5" ref="1">
    <original>R</original>
    <variation>H</variation>
    <location>
        <position position="418"/>
    </location>
</feature>
<feature type="sequence conflict" description="In Ref. 1; ABF57376." evidence="5" ref="1">
    <original>R</original>
    <variation>Q</variation>
    <location>
        <position position="433"/>
    </location>
</feature>
<gene>
    <name type="primary">D2HGDH</name>
</gene>
<organism>
    <name type="scientific">Bos taurus</name>
    <name type="common">Bovine</name>
    <dbReference type="NCBI Taxonomy" id="9913"/>
    <lineage>
        <taxon>Eukaryota</taxon>
        <taxon>Metazoa</taxon>
        <taxon>Chordata</taxon>
        <taxon>Craniata</taxon>
        <taxon>Vertebrata</taxon>
        <taxon>Euteleostomi</taxon>
        <taxon>Mammalia</taxon>
        <taxon>Eutheria</taxon>
        <taxon>Laurasiatheria</taxon>
        <taxon>Artiodactyla</taxon>
        <taxon>Ruminantia</taxon>
        <taxon>Pecora</taxon>
        <taxon>Bovidae</taxon>
        <taxon>Bovinae</taxon>
        <taxon>Bos</taxon>
    </lineage>
</organism>
<sequence>MMMPRLVPRWPAWLFCWRAACIQGASVRQKMWAGPSKIPGLGGPRGAWGTSPLVPRGSCSASSRTPEVTLTPERYPVQRLPFSVVSEDDLAALERVVPGRVITDPEELEPPNVDWLRTVRGSSKVLLRPRTTQEVAHILRYCHERNLAVNPQGGNTGMVGGSTPVFDEIILSTALMNQVLSFHDVSGVLVCQAGCVLEALSQYVEERGFIMPLDLGAKGSCHIGGNVATNAGGLRVLRYGSLRGTVLGLEVVLADGTVLNCLTSLRKDNTGYDLKQLFIGSEGTLGVITAVSILCPPKPSTVNVAFLGCPGFAEVLQTFRTCRAMLGEILSAFEFMDAECMKLVRLHLGLSCPVQESPFYVLIETAGSGPGHDAEKLGCFLEQVLDSGLVTDGTLGSDERRIKMLWALRERITEALSRDGYVYKYDLSLPLDRLYDLVGDLRARLGPSAKHVVGYGHLGDGNLHLNVTSEAFSTSLLGALEPYVYEWTAGQRGSVSAEHGLGFKKKDVLGYSKPPEALQLMRQLKALLDPKGILNPYKMLPTHA</sequence>
<accession>Q1JPD3</accession>
<accession>A5PKH4</accession>
<dbReference type="EC" id="1.1.99.39" evidence="2"/>
<dbReference type="EMBL" id="BT025420">
    <property type="protein sequence ID" value="ABF57376.1"/>
    <property type="molecule type" value="mRNA"/>
</dbReference>
<dbReference type="EMBL" id="BC142488">
    <property type="protein sequence ID" value="AAI42489.1"/>
    <property type="molecule type" value="mRNA"/>
</dbReference>
<dbReference type="RefSeq" id="NP_001069446.1">
    <property type="nucleotide sequence ID" value="NM_001075978.1"/>
</dbReference>
<dbReference type="RefSeq" id="XP_005205097.1">
    <property type="nucleotide sequence ID" value="XM_005205040.4"/>
</dbReference>
<dbReference type="RefSeq" id="XP_005205098.1">
    <property type="nucleotide sequence ID" value="XM_005205041.5"/>
</dbReference>
<dbReference type="RefSeq" id="XP_010802204.1">
    <property type="nucleotide sequence ID" value="XM_010803902.2"/>
</dbReference>
<dbReference type="RefSeq" id="XP_010802205.1">
    <property type="nucleotide sequence ID" value="XM_010803903.4"/>
</dbReference>
<dbReference type="SMR" id="Q1JPD3"/>
<dbReference type="FunCoup" id="Q1JPD3">
    <property type="interactions" value="1416"/>
</dbReference>
<dbReference type="STRING" id="9913.ENSBTAP00000062563"/>
<dbReference type="PaxDb" id="9913-ENSBTAP00000003690"/>
<dbReference type="Ensembl" id="ENSBTAT00000003690.6">
    <property type="protein sequence ID" value="ENSBTAP00000003690.4"/>
    <property type="gene ID" value="ENSBTAG00000002847.7"/>
</dbReference>
<dbReference type="GeneID" id="533003"/>
<dbReference type="KEGG" id="bta:533003"/>
<dbReference type="CTD" id="728294"/>
<dbReference type="VEuPathDB" id="HostDB:ENSBTAG00000002847"/>
<dbReference type="VGNC" id="VGNC:27861">
    <property type="gene designation" value="D2HGDH"/>
</dbReference>
<dbReference type="eggNOG" id="KOG1232">
    <property type="taxonomic scope" value="Eukaryota"/>
</dbReference>
<dbReference type="GeneTree" id="ENSGT00550000075086"/>
<dbReference type="HOGENOM" id="CLU_017779_4_1_1"/>
<dbReference type="InParanoid" id="Q1JPD3"/>
<dbReference type="OMA" id="YNEDWMR"/>
<dbReference type="OrthoDB" id="5332616at2759"/>
<dbReference type="TreeFam" id="TF323342"/>
<dbReference type="Reactome" id="R-BTA-880009">
    <property type="pathway name" value="Interconversion of 2-oxoglutarate and 2-hydroxyglutarate"/>
</dbReference>
<dbReference type="Proteomes" id="UP000009136">
    <property type="component" value="Chromosome 3"/>
</dbReference>
<dbReference type="Bgee" id="ENSBTAG00000002847">
    <property type="expression patterns" value="Expressed in laryngeal cartilage and 105 other cell types or tissues"/>
</dbReference>
<dbReference type="GO" id="GO:0005739">
    <property type="term" value="C:mitochondrion"/>
    <property type="evidence" value="ECO:0000318"/>
    <property type="project" value="GO_Central"/>
</dbReference>
<dbReference type="GO" id="GO:0051990">
    <property type="term" value="F:(R)-2-hydroxyglutarate dehydrogenase activity"/>
    <property type="evidence" value="ECO:0000250"/>
    <property type="project" value="UniProtKB"/>
</dbReference>
<dbReference type="GO" id="GO:0071949">
    <property type="term" value="F:FAD binding"/>
    <property type="evidence" value="ECO:0007669"/>
    <property type="project" value="InterPro"/>
</dbReference>
<dbReference type="GO" id="GO:0008270">
    <property type="term" value="F:zinc ion binding"/>
    <property type="evidence" value="ECO:0000250"/>
    <property type="project" value="UniProtKB"/>
</dbReference>
<dbReference type="GO" id="GO:0006108">
    <property type="term" value="P:malate metabolic process"/>
    <property type="evidence" value="ECO:0000250"/>
    <property type="project" value="UniProtKB"/>
</dbReference>
<dbReference type="FunFam" id="3.30.70.2190:FF:000001">
    <property type="entry name" value="D-2-hydroxyglutarate dehydrogenase mitochondrial"/>
    <property type="match status" value="1"/>
</dbReference>
<dbReference type="FunFam" id="3.30.70.2740:FF:000002">
    <property type="entry name" value="D-2-hydroxyglutarate dehydrogenase mitochondrial"/>
    <property type="match status" value="1"/>
</dbReference>
<dbReference type="FunFam" id="3.30.43.10:FF:000002">
    <property type="entry name" value="D-2-hydroxyglutarate dehydrogenase, mitochondrial"/>
    <property type="match status" value="1"/>
</dbReference>
<dbReference type="FunFam" id="3.30.465.10:FF:000053">
    <property type="entry name" value="D-lactate dehydrogenase (Cytochrome), putative"/>
    <property type="match status" value="1"/>
</dbReference>
<dbReference type="FunFam" id="1.10.45.10:FF:000001">
    <property type="entry name" value="D-lactate dehydrogenase mitochondrial"/>
    <property type="match status" value="1"/>
</dbReference>
<dbReference type="Gene3D" id="3.30.465.10">
    <property type="match status" value="1"/>
</dbReference>
<dbReference type="Gene3D" id="3.30.70.2190">
    <property type="match status" value="1"/>
</dbReference>
<dbReference type="Gene3D" id="3.30.70.2740">
    <property type="match status" value="1"/>
</dbReference>
<dbReference type="Gene3D" id="3.30.43.10">
    <property type="entry name" value="Uridine Diphospho-n-acetylenolpyruvylglucosamine Reductase, domain 2"/>
    <property type="match status" value="1"/>
</dbReference>
<dbReference type="Gene3D" id="1.10.45.10">
    <property type="entry name" value="Vanillyl-alcohol Oxidase, Chain A, domain 4"/>
    <property type="match status" value="1"/>
</dbReference>
<dbReference type="InterPro" id="IPR004113">
    <property type="entry name" value="FAD-bd_oxidored_4_C"/>
</dbReference>
<dbReference type="InterPro" id="IPR016166">
    <property type="entry name" value="FAD-bd_PCMH"/>
</dbReference>
<dbReference type="InterPro" id="IPR036318">
    <property type="entry name" value="FAD-bd_PCMH-like_sf"/>
</dbReference>
<dbReference type="InterPro" id="IPR016167">
    <property type="entry name" value="FAD-bd_PCMH_sub1"/>
</dbReference>
<dbReference type="InterPro" id="IPR016169">
    <property type="entry name" value="FAD-bd_PCMH_sub2"/>
</dbReference>
<dbReference type="InterPro" id="IPR016164">
    <property type="entry name" value="FAD-linked_Oxase-like_C"/>
</dbReference>
<dbReference type="InterPro" id="IPR051264">
    <property type="entry name" value="FAD-oxidored/transferase_4"/>
</dbReference>
<dbReference type="InterPro" id="IPR006094">
    <property type="entry name" value="Oxid_FAD_bind_N"/>
</dbReference>
<dbReference type="InterPro" id="IPR016171">
    <property type="entry name" value="Vanillyl_alc_oxidase_C-sub2"/>
</dbReference>
<dbReference type="PANTHER" id="PTHR43716">
    <property type="entry name" value="D-2-HYDROXYGLUTARATE DEHYDROGENASE, MITOCHONDRIAL"/>
    <property type="match status" value="1"/>
</dbReference>
<dbReference type="PANTHER" id="PTHR43716:SF1">
    <property type="entry name" value="D-2-HYDROXYGLUTARATE DEHYDROGENASE, MITOCHONDRIAL"/>
    <property type="match status" value="1"/>
</dbReference>
<dbReference type="Pfam" id="PF02913">
    <property type="entry name" value="FAD-oxidase_C"/>
    <property type="match status" value="1"/>
</dbReference>
<dbReference type="Pfam" id="PF01565">
    <property type="entry name" value="FAD_binding_4"/>
    <property type="match status" value="1"/>
</dbReference>
<dbReference type="SUPFAM" id="SSF56176">
    <property type="entry name" value="FAD-binding/transporter-associated domain-like"/>
    <property type="match status" value="1"/>
</dbReference>
<dbReference type="SUPFAM" id="SSF55103">
    <property type="entry name" value="FAD-linked oxidases, C-terminal domain"/>
    <property type="match status" value="1"/>
</dbReference>
<dbReference type="PROSITE" id="PS51387">
    <property type="entry name" value="FAD_PCMH"/>
    <property type="match status" value="1"/>
</dbReference>
<keyword id="KW-0274">FAD</keyword>
<keyword id="KW-0285">Flavoprotein</keyword>
<keyword id="KW-0479">Metal-binding</keyword>
<keyword id="KW-0496">Mitochondrion</keyword>
<keyword id="KW-0560">Oxidoreductase</keyword>
<keyword id="KW-1185">Reference proteome</keyword>
<keyword id="KW-0809">Transit peptide</keyword>
<keyword id="KW-0862">Zinc</keyword>
<reference key="1">
    <citation type="journal article" date="2005" name="BMC Genomics">
        <title>Characterization of 954 bovine full-CDS cDNA sequences.</title>
        <authorList>
            <person name="Harhay G.P."/>
            <person name="Sonstegard T.S."/>
            <person name="Keele J.W."/>
            <person name="Heaton M.P."/>
            <person name="Clawson M.L."/>
            <person name="Snelling W.M."/>
            <person name="Wiedmann R.T."/>
            <person name="Van Tassell C.P."/>
            <person name="Smith T.P.L."/>
        </authorList>
    </citation>
    <scope>NUCLEOTIDE SEQUENCE [LARGE SCALE MRNA]</scope>
</reference>
<reference key="2">
    <citation type="submission" date="2007-06" db="EMBL/GenBank/DDBJ databases">
        <authorList>
            <consortium name="NIH - Mammalian Gene Collection (MGC) project"/>
        </authorList>
    </citation>
    <scope>NUCLEOTIDE SEQUENCE [LARGE SCALE MRNA]</scope>
    <source>
        <strain>Hereford</strain>
        <tissue>Ascending colon</tissue>
    </source>
</reference>
<proteinExistence type="evidence at transcript level"/>
<evidence type="ECO:0000250" key="1">
    <source>
        <dbReference type="UniProtKB" id="Q8CIM3"/>
    </source>
</evidence>
<evidence type="ECO:0000250" key="2">
    <source>
        <dbReference type="UniProtKB" id="Q8N465"/>
    </source>
</evidence>
<evidence type="ECO:0000255" key="3"/>
<evidence type="ECO:0000255" key="4">
    <source>
        <dbReference type="PROSITE-ProRule" id="PRU00718"/>
    </source>
</evidence>
<evidence type="ECO:0000305" key="5"/>
<name>D2HDH_BOVIN</name>
<protein>
    <recommendedName>
        <fullName>D-2-hydroxyglutarate dehydrogenase, mitochondrial</fullName>
        <ecNumber evidence="2">1.1.99.39</ecNumber>
    </recommendedName>
</protein>
<comment type="function">
    <text evidence="2">Catalyzes the oxidation of D-2-hydroxyglutarate (D-2-HG) to alpha-ketoglutarate (By similarity). Also catalyzes the oxidation of other D-2-hydroxyacids, such as D-malate (D-MAL) and D-lactate (D-LAC) (By similarity). Exhibits high activities towards D-2-HG and D-MAL but a very weak activity towards D-LAC (By similarity).</text>
</comment>
<comment type="catalytic activity">
    <reaction evidence="2">
        <text>(R)-2-hydroxyglutarate + A = 2-oxoglutarate + AH2</text>
        <dbReference type="Rhea" id="RHEA:38295"/>
        <dbReference type="ChEBI" id="CHEBI:13193"/>
        <dbReference type="ChEBI" id="CHEBI:15801"/>
        <dbReference type="ChEBI" id="CHEBI:16810"/>
        <dbReference type="ChEBI" id="CHEBI:17499"/>
        <dbReference type="EC" id="1.1.99.39"/>
    </reaction>
</comment>
<comment type="catalytic activity">
    <reaction evidence="2">
        <text>(R)-malate + A = oxaloacetate + AH2</text>
        <dbReference type="Rhea" id="RHEA:67460"/>
        <dbReference type="ChEBI" id="CHEBI:13193"/>
        <dbReference type="ChEBI" id="CHEBI:15588"/>
        <dbReference type="ChEBI" id="CHEBI:16452"/>
        <dbReference type="ChEBI" id="CHEBI:17499"/>
    </reaction>
    <physiologicalReaction direction="left-to-right" evidence="2">
        <dbReference type="Rhea" id="RHEA:67461"/>
    </physiologicalReaction>
</comment>
<comment type="cofactor">
    <cofactor evidence="5">
        <name>FAD</name>
        <dbReference type="ChEBI" id="CHEBI:57692"/>
    </cofactor>
</comment>
<comment type="activity regulation">
    <text evidence="2">Activated by zinc and cobalt ions.</text>
</comment>
<comment type="subcellular location">
    <subcellularLocation>
        <location evidence="5">Mitochondrion</location>
    </subcellularLocation>
</comment>
<comment type="similarity">
    <text evidence="5">Belongs to the FAD-binding oxidoreductase/transferase type 4 family.</text>
</comment>